<protein>
    <recommendedName>
        <fullName>Cytochrome b</fullName>
    </recommendedName>
    <alternativeName>
        <fullName>Complex III subunit 3</fullName>
    </alternativeName>
    <alternativeName>
        <fullName>Complex III subunit III</fullName>
    </alternativeName>
    <alternativeName>
        <fullName>Cytochrome b-c1 complex subunit 3</fullName>
    </alternativeName>
    <alternativeName>
        <fullName>Ubiquinol-cytochrome-c reductase complex cytochrome b subunit</fullName>
    </alternativeName>
</protein>
<accession>Q8LWU4</accession>
<proteinExistence type="inferred from homology"/>
<geneLocation type="mitochondrion"/>
<dbReference type="EMBL" id="AJ421452">
    <property type="protein sequence ID" value="CAD13407.1"/>
    <property type="molecule type" value="Genomic_DNA"/>
</dbReference>
<dbReference type="RefSeq" id="NP_659312.1">
    <property type="nucleotide sequence ID" value="NC_004026.1"/>
</dbReference>
<dbReference type="SMR" id="Q8LWU4"/>
<dbReference type="GeneID" id="804988"/>
<dbReference type="CTD" id="4519"/>
<dbReference type="GO" id="GO:0005743">
    <property type="term" value="C:mitochondrial inner membrane"/>
    <property type="evidence" value="ECO:0007669"/>
    <property type="project" value="UniProtKB-SubCell"/>
</dbReference>
<dbReference type="GO" id="GO:0045275">
    <property type="term" value="C:respiratory chain complex III"/>
    <property type="evidence" value="ECO:0007669"/>
    <property type="project" value="InterPro"/>
</dbReference>
<dbReference type="GO" id="GO:0046872">
    <property type="term" value="F:metal ion binding"/>
    <property type="evidence" value="ECO:0007669"/>
    <property type="project" value="UniProtKB-KW"/>
</dbReference>
<dbReference type="GO" id="GO:0008121">
    <property type="term" value="F:ubiquinol-cytochrome-c reductase activity"/>
    <property type="evidence" value="ECO:0007669"/>
    <property type="project" value="InterPro"/>
</dbReference>
<dbReference type="GO" id="GO:0006122">
    <property type="term" value="P:mitochondrial electron transport, ubiquinol to cytochrome c"/>
    <property type="evidence" value="ECO:0007669"/>
    <property type="project" value="TreeGrafter"/>
</dbReference>
<dbReference type="CDD" id="cd00290">
    <property type="entry name" value="cytochrome_b_C"/>
    <property type="match status" value="1"/>
</dbReference>
<dbReference type="CDD" id="cd00284">
    <property type="entry name" value="Cytochrome_b_N"/>
    <property type="match status" value="1"/>
</dbReference>
<dbReference type="FunFam" id="1.20.810.10:FF:000002">
    <property type="entry name" value="Cytochrome b"/>
    <property type="match status" value="1"/>
</dbReference>
<dbReference type="Gene3D" id="1.20.810.10">
    <property type="entry name" value="Cytochrome Bc1 Complex, Chain C"/>
    <property type="match status" value="1"/>
</dbReference>
<dbReference type="InterPro" id="IPR005798">
    <property type="entry name" value="Cyt_b/b6_C"/>
</dbReference>
<dbReference type="InterPro" id="IPR036150">
    <property type="entry name" value="Cyt_b/b6_C_sf"/>
</dbReference>
<dbReference type="InterPro" id="IPR005797">
    <property type="entry name" value="Cyt_b/b6_N"/>
</dbReference>
<dbReference type="InterPro" id="IPR027387">
    <property type="entry name" value="Cytb/b6-like_sf"/>
</dbReference>
<dbReference type="InterPro" id="IPR030689">
    <property type="entry name" value="Cytochrome_b"/>
</dbReference>
<dbReference type="InterPro" id="IPR048260">
    <property type="entry name" value="Cytochrome_b_C_euk/bac"/>
</dbReference>
<dbReference type="InterPro" id="IPR048259">
    <property type="entry name" value="Cytochrome_b_N_euk/bac"/>
</dbReference>
<dbReference type="InterPro" id="IPR016174">
    <property type="entry name" value="Di-haem_cyt_TM"/>
</dbReference>
<dbReference type="PANTHER" id="PTHR19271">
    <property type="entry name" value="CYTOCHROME B"/>
    <property type="match status" value="1"/>
</dbReference>
<dbReference type="PANTHER" id="PTHR19271:SF16">
    <property type="entry name" value="CYTOCHROME B"/>
    <property type="match status" value="1"/>
</dbReference>
<dbReference type="Pfam" id="PF00032">
    <property type="entry name" value="Cytochrom_B_C"/>
    <property type="match status" value="1"/>
</dbReference>
<dbReference type="Pfam" id="PF00033">
    <property type="entry name" value="Cytochrome_B"/>
    <property type="match status" value="1"/>
</dbReference>
<dbReference type="PIRSF" id="PIRSF038885">
    <property type="entry name" value="COB"/>
    <property type="match status" value="1"/>
</dbReference>
<dbReference type="SUPFAM" id="SSF81648">
    <property type="entry name" value="a domain/subunit of cytochrome bc1 complex (Ubiquinol-cytochrome c reductase)"/>
    <property type="match status" value="1"/>
</dbReference>
<dbReference type="SUPFAM" id="SSF81342">
    <property type="entry name" value="Transmembrane di-heme cytochromes"/>
    <property type="match status" value="1"/>
</dbReference>
<dbReference type="PROSITE" id="PS51003">
    <property type="entry name" value="CYTB_CTER"/>
    <property type="match status" value="1"/>
</dbReference>
<dbReference type="PROSITE" id="PS51002">
    <property type="entry name" value="CYTB_NTER"/>
    <property type="match status" value="1"/>
</dbReference>
<name>CYB_MACPR</name>
<sequence>MTNIRKSHPLLKILNHSFVDLPAPSNISSWWNFGSLLGMCLIIQILTGLFLAMHYTSDTMTAFSSVTHICRDVNYGWLIRYVHANGASLFFICLFIHAGRGIYYGSYLYSETWNIGVVLLFITMATAFVGYVLPWGQMSFWGATVITNLLSAIPYVGSTLVEWIWGGFSVDKATLTRFFAFHFILPFIIAALAMVHLLFLHETGSNNPLGLISDSDKIPFHPYYTIKDLLGMLLTILLLTGLVLFSPDLLGDPDNYTPANPLNTPPHIKPEWYFLFAYAILRSIPNKLGGVVALVMSILILAIMPLLHTSKHRSLMFRPISQCLFWILVADMLTLTWIGGQPVEDPFITIGQVASILYFLLILVLMPIAGLIENHLIKL</sequence>
<evidence type="ECO:0000250" key="1"/>
<evidence type="ECO:0000250" key="2">
    <source>
        <dbReference type="UniProtKB" id="P00157"/>
    </source>
</evidence>
<evidence type="ECO:0000255" key="3">
    <source>
        <dbReference type="PROSITE-ProRule" id="PRU00967"/>
    </source>
</evidence>
<evidence type="ECO:0000255" key="4">
    <source>
        <dbReference type="PROSITE-ProRule" id="PRU00968"/>
    </source>
</evidence>
<keyword id="KW-0249">Electron transport</keyword>
<keyword id="KW-0349">Heme</keyword>
<keyword id="KW-0408">Iron</keyword>
<keyword id="KW-0472">Membrane</keyword>
<keyword id="KW-0479">Metal-binding</keyword>
<keyword id="KW-0496">Mitochondrion</keyword>
<keyword id="KW-0999">Mitochondrion inner membrane</keyword>
<keyword id="KW-0679">Respiratory chain</keyword>
<keyword id="KW-0812">Transmembrane</keyword>
<keyword id="KW-1133">Transmembrane helix</keyword>
<keyword id="KW-0813">Transport</keyword>
<keyword id="KW-0830">Ubiquinone</keyword>
<gene>
    <name type="primary">MT-CYB</name>
    <name type="synonym">COB</name>
    <name type="synonym">CYTB</name>
    <name type="synonym">MTCYB</name>
</gene>
<feature type="chain" id="PRO_0000254815" description="Cytochrome b">
    <location>
        <begin position="1"/>
        <end position="379"/>
    </location>
</feature>
<feature type="transmembrane region" description="Helical" evidence="2">
    <location>
        <begin position="33"/>
        <end position="53"/>
    </location>
</feature>
<feature type="transmembrane region" description="Helical" evidence="2">
    <location>
        <begin position="77"/>
        <end position="98"/>
    </location>
</feature>
<feature type="transmembrane region" description="Helical" evidence="2">
    <location>
        <begin position="113"/>
        <end position="133"/>
    </location>
</feature>
<feature type="transmembrane region" description="Helical" evidence="2">
    <location>
        <begin position="178"/>
        <end position="198"/>
    </location>
</feature>
<feature type="transmembrane region" description="Helical" evidence="2">
    <location>
        <begin position="226"/>
        <end position="246"/>
    </location>
</feature>
<feature type="transmembrane region" description="Helical" evidence="2">
    <location>
        <begin position="288"/>
        <end position="308"/>
    </location>
</feature>
<feature type="transmembrane region" description="Helical" evidence="2">
    <location>
        <begin position="320"/>
        <end position="340"/>
    </location>
</feature>
<feature type="transmembrane region" description="Helical" evidence="2">
    <location>
        <begin position="347"/>
        <end position="367"/>
    </location>
</feature>
<feature type="binding site" description="axial binding residue" evidence="2">
    <location>
        <position position="83"/>
    </location>
    <ligand>
        <name>heme b</name>
        <dbReference type="ChEBI" id="CHEBI:60344"/>
        <label>b562</label>
    </ligand>
    <ligandPart>
        <name>Fe</name>
        <dbReference type="ChEBI" id="CHEBI:18248"/>
    </ligandPart>
</feature>
<feature type="binding site" description="axial binding residue" evidence="2">
    <location>
        <position position="97"/>
    </location>
    <ligand>
        <name>heme b</name>
        <dbReference type="ChEBI" id="CHEBI:60344"/>
        <label>b566</label>
    </ligand>
    <ligandPart>
        <name>Fe</name>
        <dbReference type="ChEBI" id="CHEBI:18248"/>
    </ligandPart>
</feature>
<feature type="binding site" description="axial binding residue" evidence="2">
    <location>
        <position position="182"/>
    </location>
    <ligand>
        <name>heme b</name>
        <dbReference type="ChEBI" id="CHEBI:60344"/>
        <label>b562</label>
    </ligand>
    <ligandPart>
        <name>Fe</name>
        <dbReference type="ChEBI" id="CHEBI:18248"/>
    </ligandPart>
</feature>
<feature type="binding site" description="axial binding residue" evidence="2">
    <location>
        <position position="196"/>
    </location>
    <ligand>
        <name>heme b</name>
        <dbReference type="ChEBI" id="CHEBI:60344"/>
        <label>b566</label>
    </ligand>
    <ligandPart>
        <name>Fe</name>
        <dbReference type="ChEBI" id="CHEBI:18248"/>
    </ligandPart>
</feature>
<feature type="binding site" evidence="2">
    <location>
        <position position="201"/>
    </location>
    <ligand>
        <name>a ubiquinone</name>
        <dbReference type="ChEBI" id="CHEBI:16389"/>
    </ligand>
</feature>
<reference key="1">
    <citation type="journal article" date="2002" name="Proc. Natl. Acad. Sci. U.S.A.">
        <title>Mammalian mitogenomic relationships and the root of the eutherian tree.</title>
        <authorList>
            <person name="Arnason U."/>
            <person name="Adegoke J.A."/>
            <person name="Bodin K."/>
            <person name="Born E.W."/>
            <person name="Esa Y.B."/>
            <person name="Gullberg A."/>
            <person name="Nilsson M."/>
            <person name="Short R.V."/>
            <person name="Xu X."/>
            <person name="Janke A."/>
        </authorList>
    </citation>
    <scope>NUCLEOTIDE SEQUENCE [GENOMIC DNA]</scope>
</reference>
<organism>
    <name type="scientific">Macroscelides proboscideus</name>
    <name type="common">Short-eared elephant shrew</name>
    <dbReference type="NCBI Taxonomy" id="29082"/>
    <lineage>
        <taxon>Eukaryota</taxon>
        <taxon>Metazoa</taxon>
        <taxon>Chordata</taxon>
        <taxon>Craniata</taxon>
        <taxon>Vertebrata</taxon>
        <taxon>Euteleostomi</taxon>
        <taxon>Mammalia</taxon>
        <taxon>Eutheria</taxon>
        <taxon>Afrotheria</taxon>
        <taxon>Macroscelidea</taxon>
        <taxon>Macroscelididae</taxon>
        <taxon>Macroscelides</taxon>
    </lineage>
</organism>
<comment type="function">
    <text evidence="2">Component of the ubiquinol-cytochrome c reductase complex (complex III or cytochrome b-c1 complex) that is part of the mitochondrial respiratory chain. The b-c1 complex mediates electron transfer from ubiquinol to cytochrome c. Contributes to the generation of a proton gradient across the mitochondrial membrane that is then used for ATP synthesis.</text>
</comment>
<comment type="cofactor">
    <cofactor evidence="2">
        <name>heme b</name>
        <dbReference type="ChEBI" id="CHEBI:60344"/>
    </cofactor>
    <text evidence="2">Binds 2 heme b groups non-covalently.</text>
</comment>
<comment type="subunit">
    <text evidence="2">The cytochrome bc1 complex contains 11 subunits: 3 respiratory subunits (MT-CYB, CYC1 and UQCRFS1), 2 core proteins (UQCRC1 and UQCRC2) and 6 low-molecular weight proteins (UQCRH/QCR6, UQCRB/QCR7, UQCRQ/QCR8, UQCR10/QCR9, UQCR11/QCR10 and a cleavage product of UQCRFS1). This cytochrome bc1 complex then forms a dimer.</text>
</comment>
<comment type="subcellular location">
    <subcellularLocation>
        <location evidence="2">Mitochondrion inner membrane</location>
        <topology evidence="2">Multi-pass membrane protein</topology>
    </subcellularLocation>
</comment>
<comment type="miscellaneous">
    <text evidence="1">Heme 1 (or BL or b562) is low-potential and absorbs at about 562 nm, and heme 2 (or BH or b566) is high-potential and absorbs at about 566 nm.</text>
</comment>
<comment type="similarity">
    <text evidence="3 4">Belongs to the cytochrome b family.</text>
</comment>
<comment type="caution">
    <text evidence="2">The full-length protein contains only eight transmembrane helices, not nine as predicted by bioinformatics tools.</text>
</comment>